<reference key="1">
    <citation type="journal article" date="2002" name="Curr. Genet.">
        <title>A novel method used to delete a new Aspergillus fumigatus ABC transporter-encoding gene.</title>
        <authorList>
            <person name="Langfelder K."/>
            <person name="Gattung S."/>
            <person name="Brakhage A.A."/>
        </authorList>
    </citation>
    <scope>NUCLEOTIDE SEQUENCE [GENOMIC DNA]</scope>
    <scope>DISRUPTION PHENOTYPE</scope>
    <scope>FUNCTION</scope>
    <source>
        <strain>ATCC46645</strain>
    </source>
</reference>
<gene>
    <name evidence="6" type="primary">abcA</name>
</gene>
<sequence>MNESHEAGKNSSTNVEEREEEVLRLARQFTEQSSYSTAGQTPFAAEAGSALDPNGERFNARAWCKAMLQMHIGDKEAHPLRTLGVAFSNLNVHGFGSDTDYQKSVGNVWLKTLSLARIAFGQKQRKVDILQNLEGLVEAGEMLVVLGPPGSGCSTFLKTIAGETYGFHVDKNSNINFQGIAKQMAHEFRGEAIYTAEVDVHFPKLTVGDTLYFAARARTPRHIPGGVNATQYAGHMRDVIMAMFGISHTKNTIVGNDFIRGVSGGERKRVSIAEACLSNAPLQCWDNSTRGLDSANAIEFCKTLRMQADINGTTACVSLYQAPQAAYDYFDKVLVLYEGREIYFGPTSMAKHYFLQMGFVCPDRQTDADFLTSMTSHLERVVQPGYEDRVPRTPDEFAARWKASPQRAQLMQHIKSYNAKFALDGEYLDKFKQSRRAQQAKAQRVSSPYTLSYVQQVKLCLWRGYQRLKADPSVTISSLFGNTIISLVIASIFYNLKADTSTFFQRGALLFFAVLMNALGCGLEMLTLYAQRGIIEKHSRYALYHPSAEAFSSMIMDLPYKILNAITSNIVLYFMTNLRRAPGAFFFFVFTSFILTLTMSMFFRSMASLSRSLVQVLPFSAVLLLGLSMYTGFAIPTGYMLGWARWIAYINPISYGFESLMINEFHNRDFPCMDYVPSGPGYTDVGLNNRVCSTVRSVPGQAFVNGNAYIESAYSYTASHKWRNIGVIFAYMFLLGAVYLVATDFITEKKPKGEILVFPRGHKALKKGKSDEDLEGGGGRSATVEKIGSDGLAMIERQTAIFQWKDVCFDIKIGKENCRILDHVDGWVKPGILTALMGVSGAGKTTLLDVLATRTTMGIISGEMLVDGQPRDESFQRKTGYAQQQDLHLSTATVREALEFSALLRQSAHVPRQEKIDYVTEVIKLLDMTEYADAVIGVPGEGLNVEQRKRLTIGVELAARPQLLLFLDEPTSGLDSQTSWAILDLLDKLKKNGQAILCTIHQPSAMLFQRFDRLLFLQAGGRTVYFGEIGQNSQILIDYFVRNGAPPCPPDANPAEWMLDVIGAAPGSHTSINWFETWRRSPEYARVQEHLAELKHERRHQTNLFRTTSGQKREDKDSYREFAAPFWAQLYQVQVRVFQQIWRSPTYINSKTALCVLSALFVGFSLFHTPNTIQGLQNQMFGIFMLLTLFGQLIQQIMPHFVAQRALYEVRDRPAKTYSWKAFLIANIVVELPWNSLMSVLMFLCWYYPIGLYRNAEPTDAVHLRGTQMWLMIWTFLLFSSTFAHFMIAAFDAAENAGNLGNLLFLLCLLFCGVLATPDQLPRFWIFMYRVSPFTYLVSGMLSVGISNTNVTCADNEYLRFDPVNGTCGEYMGSYMSNLGGYLADEMATANCSFCPIKETNVFLGRVSSSYSDIWRNFGLMWVFIVFNIFAACSLYWWVRVPRDKKPVAKAE</sequence>
<feature type="chain" id="PRO_0000445095" description="ABC multidrug transporter A">
    <location>
        <begin position="1"/>
        <end position="1452"/>
    </location>
</feature>
<feature type="transmembrane region" description="Helical" evidence="1">
    <location>
        <begin position="474"/>
        <end position="494"/>
    </location>
</feature>
<feature type="transmembrane region" description="Helical" evidence="1">
    <location>
        <begin position="508"/>
        <end position="528"/>
    </location>
</feature>
<feature type="transmembrane region" description="Helical" evidence="1">
    <location>
        <begin position="554"/>
        <end position="574"/>
    </location>
</feature>
<feature type="transmembrane region" description="Helical" evidence="1">
    <location>
        <begin position="583"/>
        <end position="603"/>
    </location>
</feature>
<feature type="transmembrane region" description="Helical" evidence="1">
    <location>
        <begin position="616"/>
        <end position="636"/>
    </location>
</feature>
<feature type="transmembrane region" description="Helical" evidence="1">
    <location>
        <begin position="725"/>
        <end position="745"/>
    </location>
</feature>
<feature type="transmembrane region" description="Helical" evidence="1">
    <location>
        <begin position="1153"/>
        <end position="1173"/>
    </location>
</feature>
<feature type="transmembrane region" description="Helical" evidence="1">
    <location>
        <begin position="1183"/>
        <end position="1203"/>
    </location>
</feature>
<feature type="transmembrane region" description="Helical" evidence="1">
    <location>
        <begin position="1223"/>
        <end position="1243"/>
    </location>
</feature>
<feature type="transmembrane region" description="Helical" evidence="1">
    <location>
        <begin position="1271"/>
        <end position="1291"/>
    </location>
</feature>
<feature type="transmembrane region" description="Helical" evidence="1">
    <location>
        <begin position="1297"/>
        <end position="1317"/>
    </location>
</feature>
<feature type="transmembrane region" description="Helical" evidence="1">
    <location>
        <begin position="1418"/>
        <end position="1438"/>
    </location>
</feature>
<feature type="domain" description="ABC transporter 1" evidence="2">
    <location>
        <begin position="110"/>
        <end position="363"/>
    </location>
</feature>
<feature type="domain" description="ABC transporter 2" evidence="2">
    <location>
        <begin position="802"/>
        <end position="1044"/>
    </location>
</feature>
<feature type="region of interest" description="Disordered" evidence="4">
    <location>
        <begin position="1"/>
        <end position="20"/>
    </location>
</feature>
<feature type="binding site" evidence="2">
    <location>
        <begin position="838"/>
        <end position="845"/>
    </location>
    <ligand>
        <name>ATP</name>
        <dbReference type="ChEBI" id="CHEBI:30616"/>
    </ligand>
</feature>
<feature type="glycosylation site" description="N-linked (GlcNAc...) asparagine" evidence="3">
    <location>
        <position position="2"/>
    </location>
</feature>
<feature type="glycosylation site" description="N-linked (GlcNAc...) asparagine" evidence="3">
    <location>
        <position position="10"/>
    </location>
</feature>
<feature type="glycosylation site" description="N-linked (GlcNAc...) asparagine" evidence="3">
    <location>
        <position position="228"/>
    </location>
</feature>
<feature type="glycosylation site" description="N-linked (GlcNAc...) asparagine" evidence="3">
    <location>
        <position position="287"/>
    </location>
</feature>
<feature type="glycosylation site" description="N-linked (GlcNAc...) asparagine" evidence="3">
    <location>
        <position position="311"/>
    </location>
</feature>
<feature type="glycosylation site" description="N-linked (GlcNAc...) asparagine" evidence="3">
    <location>
        <position position="1350"/>
    </location>
</feature>
<feature type="glycosylation site" description="N-linked (GlcNAc...) asparagine" evidence="3">
    <location>
        <position position="1365"/>
    </location>
</feature>
<feature type="glycosylation site" description="N-linked (GlcNAc...) asparagine" evidence="3">
    <location>
        <position position="1391"/>
    </location>
</feature>
<accession>Q8X170</accession>
<evidence type="ECO:0000255" key="1"/>
<evidence type="ECO:0000255" key="2">
    <source>
        <dbReference type="PROSITE-ProRule" id="PRU00434"/>
    </source>
</evidence>
<evidence type="ECO:0000255" key="3">
    <source>
        <dbReference type="PROSITE-ProRule" id="PRU00498"/>
    </source>
</evidence>
<evidence type="ECO:0000256" key="4">
    <source>
        <dbReference type="SAM" id="MobiDB-lite"/>
    </source>
</evidence>
<evidence type="ECO:0000269" key="5">
    <source>
    </source>
</evidence>
<evidence type="ECO:0000303" key="6">
    <source>
    </source>
</evidence>
<evidence type="ECO:0000305" key="7"/>
<dbReference type="EMBL" id="AJ417501">
    <property type="protein sequence ID" value="CAD10327.1"/>
    <property type="molecule type" value="Genomic_DNA"/>
</dbReference>
<dbReference type="SMR" id="Q8X170"/>
<dbReference type="GlyCosmos" id="Q8X170">
    <property type="glycosylation" value="8 sites, No reported glycans"/>
</dbReference>
<dbReference type="GO" id="GO:0016020">
    <property type="term" value="C:membrane"/>
    <property type="evidence" value="ECO:0007669"/>
    <property type="project" value="UniProtKB-SubCell"/>
</dbReference>
<dbReference type="GO" id="GO:0140359">
    <property type="term" value="F:ABC-type transporter activity"/>
    <property type="evidence" value="ECO:0007669"/>
    <property type="project" value="InterPro"/>
</dbReference>
<dbReference type="GO" id="GO:0005524">
    <property type="term" value="F:ATP binding"/>
    <property type="evidence" value="ECO:0007669"/>
    <property type="project" value="UniProtKB-KW"/>
</dbReference>
<dbReference type="GO" id="GO:0016887">
    <property type="term" value="F:ATP hydrolysis activity"/>
    <property type="evidence" value="ECO:0007669"/>
    <property type="project" value="InterPro"/>
</dbReference>
<dbReference type="CDD" id="cd03233">
    <property type="entry name" value="ABCG_PDR_domain1"/>
    <property type="match status" value="1"/>
</dbReference>
<dbReference type="CDD" id="cd03232">
    <property type="entry name" value="ABCG_PDR_domain2"/>
    <property type="match status" value="1"/>
</dbReference>
<dbReference type="FunFam" id="3.40.50.300:FF:000881">
    <property type="entry name" value="ABC multidrug transporter A-1"/>
    <property type="match status" value="1"/>
</dbReference>
<dbReference type="FunFam" id="3.40.50.300:FF:000054">
    <property type="entry name" value="ABC multidrug transporter atrF"/>
    <property type="match status" value="1"/>
</dbReference>
<dbReference type="Gene3D" id="3.40.50.300">
    <property type="entry name" value="P-loop containing nucleotide triphosphate hydrolases"/>
    <property type="match status" value="2"/>
</dbReference>
<dbReference type="InterPro" id="IPR003593">
    <property type="entry name" value="AAA+_ATPase"/>
</dbReference>
<dbReference type="InterPro" id="IPR013525">
    <property type="entry name" value="ABC2_TM"/>
</dbReference>
<dbReference type="InterPro" id="IPR029481">
    <property type="entry name" value="ABC_trans_N"/>
</dbReference>
<dbReference type="InterPro" id="IPR003439">
    <property type="entry name" value="ABC_transporter-like_ATP-bd"/>
</dbReference>
<dbReference type="InterPro" id="IPR034001">
    <property type="entry name" value="ABCG_PDR_1"/>
</dbReference>
<dbReference type="InterPro" id="IPR034003">
    <property type="entry name" value="ABCG_PDR_2"/>
</dbReference>
<dbReference type="InterPro" id="IPR027417">
    <property type="entry name" value="P-loop_NTPase"/>
</dbReference>
<dbReference type="InterPro" id="IPR010929">
    <property type="entry name" value="PDR_CDR_ABC"/>
</dbReference>
<dbReference type="PANTHER" id="PTHR19241">
    <property type="entry name" value="ATP-BINDING CASSETTE TRANSPORTER"/>
    <property type="match status" value="1"/>
</dbReference>
<dbReference type="Pfam" id="PF01061">
    <property type="entry name" value="ABC2_membrane"/>
    <property type="match status" value="2"/>
</dbReference>
<dbReference type="Pfam" id="PF00005">
    <property type="entry name" value="ABC_tran"/>
    <property type="match status" value="2"/>
</dbReference>
<dbReference type="Pfam" id="PF14510">
    <property type="entry name" value="ABC_trans_N"/>
    <property type="match status" value="1"/>
</dbReference>
<dbReference type="Pfam" id="PF06422">
    <property type="entry name" value="PDR_CDR"/>
    <property type="match status" value="1"/>
</dbReference>
<dbReference type="SMART" id="SM00382">
    <property type="entry name" value="AAA"/>
    <property type="match status" value="2"/>
</dbReference>
<dbReference type="SUPFAM" id="SSF52540">
    <property type="entry name" value="P-loop containing nucleoside triphosphate hydrolases"/>
    <property type="match status" value="2"/>
</dbReference>
<dbReference type="PROSITE" id="PS50893">
    <property type="entry name" value="ABC_TRANSPORTER_2"/>
    <property type="match status" value="2"/>
</dbReference>
<comment type="function">
    <text evidence="5">ABC transporter that seems not to be involved in the efflux of toxic substances, at least not the classical compounds such as itraconazole, amphotericin B, voriconazole, posaconazole, ravuconazole, or echinocandins.</text>
</comment>
<comment type="subcellular location">
    <subcellularLocation>
        <location evidence="1">Membrane</location>
        <topology evidence="1">Multi-pass membrane protein</topology>
    </subcellularLocation>
</comment>
<comment type="disruption phenotype">
    <text evidence="5">Does not lead to growth defects or changes in developmental patterns and does not affect sensitivity to itraconazole, amphotericin B, voriconazole, posaconazole, ravuconazole, or echinocandins.</text>
</comment>
<comment type="similarity">
    <text evidence="7">Belongs to the ABC transporter superfamily. ABCG family. PDR (TC 3.A.1.205) subfamily.</text>
</comment>
<keyword id="KW-0067">ATP-binding</keyword>
<keyword id="KW-0325">Glycoprotein</keyword>
<keyword id="KW-0472">Membrane</keyword>
<keyword id="KW-0547">Nucleotide-binding</keyword>
<keyword id="KW-0677">Repeat</keyword>
<keyword id="KW-0812">Transmembrane</keyword>
<keyword id="KW-1133">Transmembrane helix</keyword>
<keyword id="KW-0813">Transport</keyword>
<name>ABCA_ASPFM</name>
<protein>
    <recommendedName>
        <fullName evidence="6">ABC multidrug transporter A</fullName>
    </recommendedName>
</protein>
<proteinExistence type="inferred from homology"/>
<organism>
    <name type="scientific">Aspergillus fumigatus</name>
    <name type="common">Neosartorya fumigata</name>
    <dbReference type="NCBI Taxonomy" id="746128"/>
    <lineage>
        <taxon>Eukaryota</taxon>
        <taxon>Fungi</taxon>
        <taxon>Dikarya</taxon>
        <taxon>Ascomycota</taxon>
        <taxon>Pezizomycotina</taxon>
        <taxon>Eurotiomycetes</taxon>
        <taxon>Eurotiomycetidae</taxon>
        <taxon>Eurotiales</taxon>
        <taxon>Aspergillaceae</taxon>
        <taxon>Aspergillus</taxon>
        <taxon>Aspergillus subgen. Fumigati</taxon>
    </lineage>
</organism>